<protein>
    <recommendedName>
        <fullName>Inter-alpha-trypsin inhibitor heavy chain H5</fullName>
        <shortName>ITI heavy chain H5</shortName>
        <shortName>ITI-HC5</shortName>
        <shortName>Inter-alpha-inhibitor heavy chain 5</shortName>
    </recommendedName>
</protein>
<dbReference type="EMBL" id="CR857457">
    <property type="protein sequence ID" value="CAH89747.1"/>
    <property type="molecule type" value="mRNA"/>
</dbReference>
<dbReference type="RefSeq" id="NP_001124799.1">
    <property type="nucleotide sequence ID" value="NM_001131327.1"/>
</dbReference>
<dbReference type="SMR" id="Q5RER0"/>
<dbReference type="STRING" id="9601.ENSPPYP00000002399"/>
<dbReference type="GlyCosmos" id="Q5RER0">
    <property type="glycosylation" value="7 sites, No reported glycans"/>
</dbReference>
<dbReference type="GeneID" id="100171653"/>
<dbReference type="KEGG" id="pon:100171653"/>
<dbReference type="CTD" id="80760"/>
<dbReference type="eggNOG" id="ENOG502QPS2">
    <property type="taxonomic scope" value="Eukaryota"/>
</dbReference>
<dbReference type="InParanoid" id="Q5RER0"/>
<dbReference type="OrthoDB" id="299997at2759"/>
<dbReference type="Proteomes" id="UP000001595">
    <property type="component" value="Unplaced"/>
</dbReference>
<dbReference type="GO" id="GO:0005576">
    <property type="term" value="C:extracellular region"/>
    <property type="evidence" value="ECO:0007669"/>
    <property type="project" value="UniProtKB-SubCell"/>
</dbReference>
<dbReference type="GO" id="GO:0004867">
    <property type="term" value="F:serine-type endopeptidase inhibitor activity"/>
    <property type="evidence" value="ECO:0007669"/>
    <property type="project" value="UniProtKB-KW"/>
</dbReference>
<dbReference type="GO" id="GO:0030212">
    <property type="term" value="P:hyaluronan metabolic process"/>
    <property type="evidence" value="ECO:0007669"/>
    <property type="project" value="InterPro"/>
</dbReference>
<dbReference type="Gene3D" id="3.40.50.410">
    <property type="entry name" value="von Willebrand factor, type A domain"/>
    <property type="match status" value="1"/>
</dbReference>
<dbReference type="InterPro" id="IPR010600">
    <property type="entry name" value="ITI_HC_C"/>
</dbReference>
<dbReference type="InterPro" id="IPR050934">
    <property type="entry name" value="ITIH"/>
</dbReference>
<dbReference type="InterPro" id="IPR013694">
    <property type="entry name" value="VIT"/>
</dbReference>
<dbReference type="InterPro" id="IPR002035">
    <property type="entry name" value="VWF_A"/>
</dbReference>
<dbReference type="InterPro" id="IPR036465">
    <property type="entry name" value="vWFA_dom_sf"/>
</dbReference>
<dbReference type="PANTHER" id="PTHR10338">
    <property type="entry name" value="INTER-ALPHA-TRYPSIN INHIBITOR HEAVY CHAIN FAMILY MEMBER"/>
    <property type="match status" value="1"/>
</dbReference>
<dbReference type="PANTHER" id="PTHR10338:SF62">
    <property type="entry name" value="INTER-ALPHA-TRYPSIN INHIBITOR HEAVY CHAIN H5"/>
    <property type="match status" value="1"/>
</dbReference>
<dbReference type="Pfam" id="PF06668">
    <property type="entry name" value="ITI_HC_C"/>
    <property type="match status" value="1"/>
</dbReference>
<dbReference type="Pfam" id="PF08487">
    <property type="entry name" value="VIT"/>
    <property type="match status" value="1"/>
</dbReference>
<dbReference type="Pfam" id="PF00092">
    <property type="entry name" value="VWA"/>
    <property type="match status" value="1"/>
</dbReference>
<dbReference type="SMART" id="SM00609">
    <property type="entry name" value="VIT"/>
    <property type="match status" value="1"/>
</dbReference>
<dbReference type="SUPFAM" id="SSF53300">
    <property type="entry name" value="vWA-like"/>
    <property type="match status" value="1"/>
</dbReference>
<dbReference type="PROSITE" id="PS51468">
    <property type="entry name" value="VIT"/>
    <property type="match status" value="1"/>
</dbReference>
<dbReference type="PROSITE" id="PS50234">
    <property type="entry name" value="VWFA"/>
    <property type="match status" value="1"/>
</dbReference>
<name>ITIH5_PONAB</name>
<feature type="signal peptide" evidence="2">
    <location>
        <begin position="1"/>
        <end position="16"/>
    </location>
</feature>
<feature type="chain" id="PRO_0000331410" description="Inter-alpha-trypsin inhibitor heavy chain H5">
    <location>
        <begin position="17"/>
        <end position="940"/>
    </location>
</feature>
<feature type="domain" description="VIT" evidence="4">
    <location>
        <begin position="35"/>
        <end position="161"/>
    </location>
</feature>
<feature type="domain" description="VWFA" evidence="3">
    <location>
        <begin position="295"/>
        <end position="478"/>
    </location>
</feature>
<feature type="region of interest" description="Disordered" evidence="5">
    <location>
        <begin position="117"/>
        <end position="136"/>
    </location>
</feature>
<feature type="region of interest" description="Disordered" evidence="5">
    <location>
        <begin position="208"/>
        <end position="227"/>
    </location>
</feature>
<feature type="region of interest" description="Disordered" evidence="5">
    <location>
        <begin position="405"/>
        <end position="432"/>
    </location>
</feature>
<feature type="region of interest" description="Disordered" evidence="5">
    <location>
        <begin position="541"/>
        <end position="571"/>
    </location>
</feature>
<feature type="compositionally biased region" description="Basic and acidic residues" evidence="5">
    <location>
        <begin position="407"/>
        <end position="417"/>
    </location>
</feature>
<feature type="glycosylation site" description="N-linked (GlcNAc...) asparagine" evidence="2">
    <location>
        <position position="97"/>
    </location>
</feature>
<feature type="glycosylation site" description="N-linked (GlcNAc...) asparagine" evidence="2">
    <location>
        <position position="127"/>
    </location>
</feature>
<feature type="glycosylation site" description="N-linked (GlcNAc...) asparagine" evidence="2">
    <location>
        <position position="231"/>
    </location>
</feature>
<feature type="glycosylation site" description="N-linked (GlcNAc...) asparagine" evidence="2">
    <location>
        <position position="508"/>
    </location>
</feature>
<feature type="glycosylation site" description="N-linked (GlcNAc...) asparagine" evidence="2">
    <location>
        <position position="774"/>
    </location>
</feature>
<feature type="glycosylation site" description="N-linked (GlcNAc...) asparagine" evidence="2">
    <location>
        <position position="793"/>
    </location>
</feature>
<feature type="glycosylation site" description="N-linked (GlcNAc...) asparagine" evidence="2">
    <location>
        <position position="860"/>
    </location>
</feature>
<keyword id="KW-0325">Glycoprotein</keyword>
<keyword id="KW-0646">Protease inhibitor</keyword>
<keyword id="KW-1185">Reference proteome</keyword>
<keyword id="KW-0964">Secreted</keyword>
<keyword id="KW-0722">Serine protease inhibitor</keyword>
<keyword id="KW-0732">Signal</keyword>
<gene>
    <name type="primary">ITIH5</name>
</gene>
<organism>
    <name type="scientific">Pongo abelii</name>
    <name type="common">Sumatran orangutan</name>
    <name type="synonym">Pongo pygmaeus abelii</name>
    <dbReference type="NCBI Taxonomy" id="9601"/>
    <lineage>
        <taxon>Eukaryota</taxon>
        <taxon>Metazoa</taxon>
        <taxon>Chordata</taxon>
        <taxon>Craniata</taxon>
        <taxon>Vertebrata</taxon>
        <taxon>Euteleostomi</taxon>
        <taxon>Mammalia</taxon>
        <taxon>Eutheria</taxon>
        <taxon>Euarchontoglires</taxon>
        <taxon>Primates</taxon>
        <taxon>Haplorrhini</taxon>
        <taxon>Catarrhini</taxon>
        <taxon>Hominidae</taxon>
        <taxon>Pongo</taxon>
    </lineage>
</organism>
<proteinExistence type="evidence at transcript level"/>
<sequence length="940" mass="105177">MLLLLGLCLGLSQCVGSQEEAQSWGHSSEQDGLRVPRQVRLLQRLKTKPLMTEFSVKSTIISRYAFTTVSCRMLNRASEDQDVEFQMQIPAAAFITNFTMLIGEKVYQGEITEREKKSGDRVKEKRNKTTEENGEKGTEIFRASAVIPSKDKAAFFLSYEELLQRRLGKYEHSISVRPQQLSGRLSVDVNILESAGIASLEVLPLRNSRQRGSGRGEDDSGPPPSTVINQNETFANIIFKPTVVQQARIAQNGILGDFIIRYDVNREQSIGDIQVLNGYFVHYFAPKDLPPLPKNVVFVLDSSASMVGTKLRQTKDALFTILHDLRPQDHFSIIGFSNRIKVWKDHFDISHSRQHQGWQSVHSPYVAHWRHRHQRGLAEGHQAPQQVRGPQWHWRPERVPHCLPDGWEAHGRGDAHPQDPQQHPRGRPRPSLHLHIGIGNDVDFRLLEKLSLENCGLTRRVHEEEDAGSQLIGFYDEIRTPLLSDIRIDYPPSSVVQATKTLFPNYFNGSEIIIAGKLVDRKLDHLHVEVTASNSKKFVIPKTDVPVGPQKAGKDVTGSPRPGGDGERNPNHIERLWSYLTTKELLSSWLQSDDEPEKERLRQRAQALAVSYRFLTPFTSMKLRGPVPRTDGLKEAHGMSAAMGPEPVVQSVRGAGTQPGPLLKKPYQPRIKISKTSVDGDPHFVVDFPLSKLTVCFNIDGQPGDILRLVSDHMDSGVTVNGELIGAPPNGHKKQRTYFRTITILINKPERSYLEITPSRVILDGGDRLVLPCNQSVVVGSRGLEVSVSANANVTVTIQGSIAFVIPIHLYKKPAPFQRHHLGFYIANSEGLSSNCHGLLGQFLNQDARLTEDPAGPSQNLTHSLLLQVGEGPEAVLTVKGRQVPVVWKQRKIYNGEEQIDCWFARNNAAKLIDGEYKDYLASHPFDTGMTLGRGMSREL</sequence>
<evidence type="ECO:0000250" key="1"/>
<evidence type="ECO:0000255" key="2"/>
<evidence type="ECO:0000255" key="3">
    <source>
        <dbReference type="PROSITE-ProRule" id="PRU00219"/>
    </source>
</evidence>
<evidence type="ECO:0000255" key="4">
    <source>
        <dbReference type="PROSITE-ProRule" id="PRU00801"/>
    </source>
</evidence>
<evidence type="ECO:0000256" key="5">
    <source>
        <dbReference type="SAM" id="MobiDB-lite"/>
    </source>
</evidence>
<evidence type="ECO:0000305" key="6"/>
<reference key="1">
    <citation type="submission" date="2004-11" db="EMBL/GenBank/DDBJ databases">
        <authorList>
            <consortium name="The German cDNA consortium"/>
        </authorList>
    </citation>
    <scope>NUCLEOTIDE SEQUENCE [LARGE SCALE MRNA]</scope>
    <source>
        <tissue>Kidney</tissue>
    </source>
</reference>
<accession>Q5RER0</accession>
<comment type="function">
    <text evidence="1">May act as a tumor suppressor.</text>
</comment>
<comment type="subcellular location">
    <subcellularLocation>
        <location evidence="1">Secreted</location>
    </subcellularLocation>
</comment>
<comment type="similarity">
    <text evidence="6">Belongs to the ITIH family.</text>
</comment>